<name>GUAA_PELPD</name>
<feature type="chain" id="PRO_1000120352" description="GMP synthase [glutamine-hydrolyzing]">
    <location>
        <begin position="1"/>
        <end position="520"/>
    </location>
</feature>
<feature type="domain" description="Glutamine amidotransferase type-1" evidence="1">
    <location>
        <begin position="9"/>
        <end position="202"/>
    </location>
</feature>
<feature type="domain" description="GMPS ATP-PPase" evidence="1">
    <location>
        <begin position="203"/>
        <end position="395"/>
    </location>
</feature>
<feature type="active site" description="Nucleophile" evidence="1">
    <location>
        <position position="86"/>
    </location>
</feature>
<feature type="active site" evidence="1">
    <location>
        <position position="176"/>
    </location>
</feature>
<feature type="active site" evidence="1">
    <location>
        <position position="178"/>
    </location>
</feature>
<feature type="binding site" evidence="1">
    <location>
        <begin position="230"/>
        <end position="236"/>
    </location>
    <ligand>
        <name>ATP</name>
        <dbReference type="ChEBI" id="CHEBI:30616"/>
    </ligand>
</feature>
<comment type="function">
    <text evidence="1">Catalyzes the synthesis of GMP from XMP.</text>
</comment>
<comment type="catalytic activity">
    <reaction evidence="1">
        <text>XMP + L-glutamine + ATP + H2O = GMP + L-glutamate + AMP + diphosphate + 2 H(+)</text>
        <dbReference type="Rhea" id="RHEA:11680"/>
        <dbReference type="ChEBI" id="CHEBI:15377"/>
        <dbReference type="ChEBI" id="CHEBI:15378"/>
        <dbReference type="ChEBI" id="CHEBI:29985"/>
        <dbReference type="ChEBI" id="CHEBI:30616"/>
        <dbReference type="ChEBI" id="CHEBI:33019"/>
        <dbReference type="ChEBI" id="CHEBI:57464"/>
        <dbReference type="ChEBI" id="CHEBI:58115"/>
        <dbReference type="ChEBI" id="CHEBI:58359"/>
        <dbReference type="ChEBI" id="CHEBI:456215"/>
        <dbReference type="EC" id="6.3.5.2"/>
    </reaction>
</comment>
<comment type="pathway">
    <text evidence="1">Purine metabolism; GMP biosynthesis; GMP from XMP (L-Gln route): step 1/1.</text>
</comment>
<comment type="subunit">
    <text evidence="1">Homodimer.</text>
</comment>
<protein>
    <recommendedName>
        <fullName evidence="1">GMP synthase [glutamine-hydrolyzing]</fullName>
        <ecNumber evidence="1">6.3.5.2</ecNumber>
    </recommendedName>
    <alternativeName>
        <fullName evidence="1">GMP synthetase</fullName>
    </alternativeName>
    <alternativeName>
        <fullName evidence="1">Glutamine amidotransferase</fullName>
    </alternativeName>
</protein>
<organism>
    <name type="scientific">Pelobacter propionicus (strain DSM 2379 / NBRC 103807 / OttBd1)</name>
    <dbReference type="NCBI Taxonomy" id="338966"/>
    <lineage>
        <taxon>Bacteria</taxon>
        <taxon>Pseudomonadati</taxon>
        <taxon>Thermodesulfobacteriota</taxon>
        <taxon>Desulfuromonadia</taxon>
        <taxon>Desulfuromonadales</taxon>
        <taxon>Desulfuromonadaceae</taxon>
        <taxon>Pelobacter</taxon>
    </lineage>
</organism>
<proteinExistence type="inferred from homology"/>
<keyword id="KW-0067">ATP-binding</keyword>
<keyword id="KW-0315">Glutamine amidotransferase</keyword>
<keyword id="KW-0332">GMP biosynthesis</keyword>
<keyword id="KW-0436">Ligase</keyword>
<keyword id="KW-0547">Nucleotide-binding</keyword>
<keyword id="KW-0658">Purine biosynthesis</keyword>
<keyword id="KW-1185">Reference proteome</keyword>
<dbReference type="EC" id="6.3.5.2" evidence="1"/>
<dbReference type="EMBL" id="CP000482">
    <property type="protein sequence ID" value="ABK99618.1"/>
    <property type="molecule type" value="Genomic_DNA"/>
</dbReference>
<dbReference type="RefSeq" id="WP_011735884.1">
    <property type="nucleotide sequence ID" value="NC_008609.1"/>
</dbReference>
<dbReference type="SMR" id="A1AQJ8"/>
<dbReference type="STRING" id="338966.Ppro_2010"/>
<dbReference type="MEROPS" id="C26.957"/>
<dbReference type="KEGG" id="ppd:Ppro_2010"/>
<dbReference type="eggNOG" id="COG0518">
    <property type="taxonomic scope" value="Bacteria"/>
</dbReference>
<dbReference type="eggNOG" id="COG0519">
    <property type="taxonomic scope" value="Bacteria"/>
</dbReference>
<dbReference type="HOGENOM" id="CLU_014340_0_5_7"/>
<dbReference type="OrthoDB" id="9802219at2"/>
<dbReference type="UniPathway" id="UPA00189">
    <property type="reaction ID" value="UER00296"/>
</dbReference>
<dbReference type="Proteomes" id="UP000006732">
    <property type="component" value="Chromosome"/>
</dbReference>
<dbReference type="GO" id="GO:0005829">
    <property type="term" value="C:cytosol"/>
    <property type="evidence" value="ECO:0007669"/>
    <property type="project" value="TreeGrafter"/>
</dbReference>
<dbReference type="GO" id="GO:0005524">
    <property type="term" value="F:ATP binding"/>
    <property type="evidence" value="ECO:0007669"/>
    <property type="project" value="UniProtKB-UniRule"/>
</dbReference>
<dbReference type="GO" id="GO:0003921">
    <property type="term" value="F:GMP synthase activity"/>
    <property type="evidence" value="ECO:0007669"/>
    <property type="project" value="InterPro"/>
</dbReference>
<dbReference type="CDD" id="cd01742">
    <property type="entry name" value="GATase1_GMP_Synthase"/>
    <property type="match status" value="1"/>
</dbReference>
<dbReference type="CDD" id="cd01997">
    <property type="entry name" value="GMP_synthase_C"/>
    <property type="match status" value="1"/>
</dbReference>
<dbReference type="FunFam" id="3.30.300.10:FF:000002">
    <property type="entry name" value="GMP synthase [glutamine-hydrolyzing]"/>
    <property type="match status" value="1"/>
</dbReference>
<dbReference type="FunFam" id="3.40.50.620:FF:000001">
    <property type="entry name" value="GMP synthase [glutamine-hydrolyzing]"/>
    <property type="match status" value="1"/>
</dbReference>
<dbReference type="FunFam" id="3.40.50.880:FF:000001">
    <property type="entry name" value="GMP synthase [glutamine-hydrolyzing]"/>
    <property type="match status" value="1"/>
</dbReference>
<dbReference type="Gene3D" id="3.30.300.10">
    <property type="match status" value="1"/>
</dbReference>
<dbReference type="Gene3D" id="3.40.50.880">
    <property type="match status" value="1"/>
</dbReference>
<dbReference type="Gene3D" id="3.40.50.620">
    <property type="entry name" value="HUPs"/>
    <property type="match status" value="1"/>
</dbReference>
<dbReference type="HAMAP" id="MF_00344">
    <property type="entry name" value="GMP_synthase"/>
    <property type="match status" value="1"/>
</dbReference>
<dbReference type="InterPro" id="IPR029062">
    <property type="entry name" value="Class_I_gatase-like"/>
</dbReference>
<dbReference type="InterPro" id="IPR017926">
    <property type="entry name" value="GATASE"/>
</dbReference>
<dbReference type="InterPro" id="IPR001674">
    <property type="entry name" value="GMP_synth_C"/>
</dbReference>
<dbReference type="InterPro" id="IPR004739">
    <property type="entry name" value="GMP_synth_GATase"/>
</dbReference>
<dbReference type="InterPro" id="IPR022955">
    <property type="entry name" value="GMP_synthase"/>
</dbReference>
<dbReference type="InterPro" id="IPR025777">
    <property type="entry name" value="GMPS_ATP_PPase_dom"/>
</dbReference>
<dbReference type="InterPro" id="IPR022310">
    <property type="entry name" value="NAD/GMP_synthase"/>
</dbReference>
<dbReference type="InterPro" id="IPR014729">
    <property type="entry name" value="Rossmann-like_a/b/a_fold"/>
</dbReference>
<dbReference type="NCBIfam" id="TIGR00884">
    <property type="entry name" value="guaA_Cterm"/>
    <property type="match status" value="1"/>
</dbReference>
<dbReference type="NCBIfam" id="TIGR00888">
    <property type="entry name" value="guaA_Nterm"/>
    <property type="match status" value="1"/>
</dbReference>
<dbReference type="NCBIfam" id="NF000848">
    <property type="entry name" value="PRK00074.1"/>
    <property type="match status" value="1"/>
</dbReference>
<dbReference type="PANTHER" id="PTHR11922:SF2">
    <property type="entry name" value="GMP SYNTHASE [GLUTAMINE-HYDROLYZING]"/>
    <property type="match status" value="1"/>
</dbReference>
<dbReference type="PANTHER" id="PTHR11922">
    <property type="entry name" value="GMP SYNTHASE-RELATED"/>
    <property type="match status" value="1"/>
</dbReference>
<dbReference type="Pfam" id="PF00117">
    <property type="entry name" value="GATase"/>
    <property type="match status" value="1"/>
</dbReference>
<dbReference type="Pfam" id="PF00958">
    <property type="entry name" value="GMP_synt_C"/>
    <property type="match status" value="1"/>
</dbReference>
<dbReference type="Pfam" id="PF02540">
    <property type="entry name" value="NAD_synthase"/>
    <property type="match status" value="1"/>
</dbReference>
<dbReference type="PRINTS" id="PR00097">
    <property type="entry name" value="ANTSNTHASEII"/>
</dbReference>
<dbReference type="PRINTS" id="PR00099">
    <property type="entry name" value="CPSGATASE"/>
</dbReference>
<dbReference type="PRINTS" id="PR00096">
    <property type="entry name" value="GATASE"/>
</dbReference>
<dbReference type="SUPFAM" id="SSF52402">
    <property type="entry name" value="Adenine nucleotide alpha hydrolases-like"/>
    <property type="match status" value="1"/>
</dbReference>
<dbReference type="SUPFAM" id="SSF52317">
    <property type="entry name" value="Class I glutamine amidotransferase-like"/>
    <property type="match status" value="1"/>
</dbReference>
<dbReference type="SUPFAM" id="SSF54810">
    <property type="entry name" value="GMP synthetase C-terminal dimerisation domain"/>
    <property type="match status" value="1"/>
</dbReference>
<dbReference type="PROSITE" id="PS51273">
    <property type="entry name" value="GATASE_TYPE_1"/>
    <property type="match status" value="1"/>
</dbReference>
<dbReference type="PROSITE" id="PS51553">
    <property type="entry name" value="GMPS_ATP_PPASE"/>
    <property type="match status" value="1"/>
</dbReference>
<gene>
    <name evidence="1" type="primary">guaA</name>
    <name type="ordered locus">Ppro_2010</name>
</gene>
<evidence type="ECO:0000255" key="1">
    <source>
        <dbReference type="HAMAP-Rule" id="MF_00344"/>
    </source>
</evidence>
<accession>A1AQJ8</accession>
<sequence length="520" mass="57594">MKTDIHSQKILILDFGSQYTQLIARRVREAHVFCELHPFDMEMAAIRAFNPSGIILSGGPKSVYEPGAPAVAEELFELGVPVLGICYGMQLMSRHFGGEVVPAGKREFGHAELLCSGQPGQLFDGFFVGGASPVWMSHGDHVSRVPDGFQVVAYTENAPVCAIQDVSRNLYGVQFHPEVNHTPRGDQLIDTFVRAICGCTGHWTPGQIIEDAVTRIQEQVGSERVILGLSGGVDSSVAAALIHRAIGDQLTCVFVDNGLLRLEEGDQVMRTFAENLGVKVIRVNAEERFLSALAGESDPEKKRKIIGSLFVEIFDEESNRIEDARWLAQGTIYPDVIESAGAKTGKAHNIKSHHNVGGLPEYMKLKLLEPLRELFKDEVRAIGEELGLPHQMVWRHPFPGPGLAVRILGEVKKEYADILRRADAIFIEELYSSDHYHKISQAFAVFLPVKSVGVMGDGRTYEYVVALRAVETKDFMTASWYPLPYEDMARISARIINEVKGVNRVVYDISSKPPATIEWE</sequence>
<reference key="1">
    <citation type="submission" date="2006-10" db="EMBL/GenBank/DDBJ databases">
        <title>Complete sequence of chromosome of Pelobacter propionicus DSM 2379.</title>
        <authorList>
            <consortium name="US DOE Joint Genome Institute"/>
            <person name="Copeland A."/>
            <person name="Lucas S."/>
            <person name="Lapidus A."/>
            <person name="Barry K."/>
            <person name="Detter J.C."/>
            <person name="Glavina del Rio T."/>
            <person name="Hammon N."/>
            <person name="Israni S."/>
            <person name="Dalin E."/>
            <person name="Tice H."/>
            <person name="Pitluck S."/>
            <person name="Saunders E."/>
            <person name="Brettin T."/>
            <person name="Bruce D."/>
            <person name="Han C."/>
            <person name="Tapia R."/>
            <person name="Schmutz J."/>
            <person name="Larimer F."/>
            <person name="Land M."/>
            <person name="Hauser L."/>
            <person name="Kyrpides N."/>
            <person name="Kim E."/>
            <person name="Lovley D."/>
            <person name="Richardson P."/>
        </authorList>
    </citation>
    <scope>NUCLEOTIDE SEQUENCE [LARGE SCALE GENOMIC DNA]</scope>
    <source>
        <strain>DSM 2379 / NBRC 103807 / OttBd1</strain>
    </source>
</reference>